<name>PTHP_STAAS</name>
<dbReference type="EMBL" id="BX571857">
    <property type="protein sequence ID" value="CAG42792.1"/>
    <property type="molecule type" value="Genomic_DNA"/>
</dbReference>
<dbReference type="RefSeq" id="WP_000437472.1">
    <property type="nucleotide sequence ID" value="NC_002953.3"/>
</dbReference>
<dbReference type="SMR" id="Q6GAD1"/>
<dbReference type="KEGG" id="sas:SAS1018"/>
<dbReference type="HOGENOM" id="CLU_136230_2_2_9"/>
<dbReference type="GO" id="GO:0005737">
    <property type="term" value="C:cytoplasm"/>
    <property type="evidence" value="ECO:0007669"/>
    <property type="project" value="UniProtKB-SubCell"/>
</dbReference>
<dbReference type="GO" id="GO:0009401">
    <property type="term" value="P:phosphoenolpyruvate-dependent sugar phosphotransferase system"/>
    <property type="evidence" value="ECO:0007669"/>
    <property type="project" value="UniProtKB-KW"/>
</dbReference>
<dbReference type="CDD" id="cd00367">
    <property type="entry name" value="PTS-HPr_like"/>
    <property type="match status" value="1"/>
</dbReference>
<dbReference type="Gene3D" id="3.30.1340.10">
    <property type="entry name" value="HPr-like"/>
    <property type="match status" value="1"/>
</dbReference>
<dbReference type="InterPro" id="IPR050399">
    <property type="entry name" value="HPr"/>
</dbReference>
<dbReference type="InterPro" id="IPR000032">
    <property type="entry name" value="HPr-like"/>
</dbReference>
<dbReference type="InterPro" id="IPR035895">
    <property type="entry name" value="HPr-like_sf"/>
</dbReference>
<dbReference type="InterPro" id="IPR001020">
    <property type="entry name" value="PTS_HPr_His_P_site"/>
</dbReference>
<dbReference type="InterPro" id="IPR002114">
    <property type="entry name" value="PTS_HPr_Ser_P_site"/>
</dbReference>
<dbReference type="NCBIfam" id="NF010352">
    <property type="entry name" value="PRK13780.1"/>
    <property type="match status" value="1"/>
</dbReference>
<dbReference type="NCBIfam" id="TIGR01003">
    <property type="entry name" value="PTS_HPr_family"/>
    <property type="match status" value="1"/>
</dbReference>
<dbReference type="PANTHER" id="PTHR33705">
    <property type="entry name" value="PHOSPHOCARRIER PROTEIN HPR"/>
    <property type="match status" value="1"/>
</dbReference>
<dbReference type="PANTHER" id="PTHR33705:SF2">
    <property type="entry name" value="PHOSPHOCARRIER PROTEIN NPR"/>
    <property type="match status" value="1"/>
</dbReference>
<dbReference type="Pfam" id="PF00381">
    <property type="entry name" value="PTS-HPr"/>
    <property type="match status" value="1"/>
</dbReference>
<dbReference type="PRINTS" id="PR00107">
    <property type="entry name" value="PHOSPHOCPHPR"/>
</dbReference>
<dbReference type="SUPFAM" id="SSF55594">
    <property type="entry name" value="HPr-like"/>
    <property type="match status" value="1"/>
</dbReference>
<dbReference type="PROSITE" id="PS51350">
    <property type="entry name" value="PTS_HPR_DOM"/>
    <property type="match status" value="1"/>
</dbReference>
<dbReference type="PROSITE" id="PS00369">
    <property type="entry name" value="PTS_HPR_HIS"/>
    <property type="match status" value="1"/>
</dbReference>
<dbReference type="PROSITE" id="PS00589">
    <property type="entry name" value="PTS_HPR_SER"/>
    <property type="match status" value="1"/>
</dbReference>
<keyword id="KW-0963">Cytoplasm</keyword>
<keyword id="KW-0597">Phosphoprotein</keyword>
<keyword id="KW-0598">Phosphotransferase system</keyword>
<keyword id="KW-0762">Sugar transport</keyword>
<keyword id="KW-0804">Transcription</keyword>
<keyword id="KW-0805">Transcription regulation</keyword>
<keyword id="KW-0813">Transport</keyword>
<sequence length="88" mass="9496">MEQNSYVIIDETGIHARPATMLVQTASKFDSDIQLEYNGKKVNLKSIMGVMSLGVGKDAEITIYADGSDESDAIQAISDVLSKEGLTK</sequence>
<reference key="1">
    <citation type="journal article" date="2004" name="Proc. Natl. Acad. Sci. U.S.A.">
        <title>Complete genomes of two clinical Staphylococcus aureus strains: evidence for the rapid evolution of virulence and drug resistance.</title>
        <authorList>
            <person name="Holden M.T.G."/>
            <person name="Feil E.J."/>
            <person name="Lindsay J.A."/>
            <person name="Peacock S.J."/>
            <person name="Day N.P.J."/>
            <person name="Enright M.C."/>
            <person name="Foster T.J."/>
            <person name="Moore C.E."/>
            <person name="Hurst L."/>
            <person name="Atkin R."/>
            <person name="Barron A."/>
            <person name="Bason N."/>
            <person name="Bentley S.D."/>
            <person name="Chillingworth C."/>
            <person name="Chillingworth T."/>
            <person name="Churcher C."/>
            <person name="Clark L."/>
            <person name="Corton C."/>
            <person name="Cronin A."/>
            <person name="Doggett J."/>
            <person name="Dowd L."/>
            <person name="Feltwell T."/>
            <person name="Hance Z."/>
            <person name="Harris B."/>
            <person name="Hauser H."/>
            <person name="Holroyd S."/>
            <person name="Jagels K."/>
            <person name="James K.D."/>
            <person name="Lennard N."/>
            <person name="Line A."/>
            <person name="Mayes R."/>
            <person name="Moule S."/>
            <person name="Mungall K."/>
            <person name="Ormond D."/>
            <person name="Quail M.A."/>
            <person name="Rabbinowitsch E."/>
            <person name="Rutherford K.M."/>
            <person name="Sanders M."/>
            <person name="Sharp S."/>
            <person name="Simmonds M."/>
            <person name="Stevens K."/>
            <person name="Whitehead S."/>
            <person name="Barrell B.G."/>
            <person name="Spratt B.G."/>
            <person name="Parkhill J."/>
        </authorList>
    </citation>
    <scope>NUCLEOTIDE SEQUENCE [LARGE SCALE GENOMIC DNA]</scope>
    <source>
        <strain>MSSA476</strain>
    </source>
</reference>
<gene>
    <name type="primary">ptsH</name>
    <name type="ordered locus">SAS1018</name>
</gene>
<protein>
    <recommendedName>
        <fullName>Phosphocarrier protein HPr</fullName>
    </recommendedName>
    <alternativeName>
        <fullName>Histidine-containing protein</fullName>
    </alternativeName>
</protein>
<proteinExistence type="inferred from homology"/>
<organism>
    <name type="scientific">Staphylococcus aureus (strain MSSA476)</name>
    <dbReference type="NCBI Taxonomy" id="282459"/>
    <lineage>
        <taxon>Bacteria</taxon>
        <taxon>Bacillati</taxon>
        <taxon>Bacillota</taxon>
        <taxon>Bacilli</taxon>
        <taxon>Bacillales</taxon>
        <taxon>Staphylococcaceae</taxon>
        <taxon>Staphylococcus</taxon>
    </lineage>
</organism>
<accession>Q6GAD1</accession>
<comment type="function">
    <text evidence="1">General (non sugar-specific) component of the phosphoenolpyruvate-dependent sugar phosphotransferase system (sugar PTS). This major carbohydrate active-transport system catalyzes the phosphorylation of incoming sugar substrates concomitantly with their translocation across the cell membrane. The phosphoryl group from phosphoenolpyruvate (PEP) is transferred to the phosphoryl carrier protein HPr by enzyme I. Phospho-HPr then transfers it to the PTS EIIA domain.</text>
</comment>
<comment type="function">
    <text evidence="1">P-Ser-HPr interacts with the catabolite control protein A (CcpA), forming a complex that binds to DNA at the catabolite response elements cre, operator sites preceding a large number of catabolite-regulated genes. Thus, P-Ser-HPr is a corepressor in carbon catabolite repression (CCR), a mechanism that allows bacteria to coordinate and optimize the utilization of available carbon sources. P-Ser-HPr also plays a role in inducer exclusion, in which it probably interacts with several non-PTS permeases and inhibits their transport activity (By similarity).</text>
</comment>
<comment type="activity regulation">
    <text evidence="1">Phosphorylation on Ser-46 inhibits the phosphoryl transfer from enzyme I to HPr.</text>
</comment>
<comment type="subcellular location">
    <subcellularLocation>
        <location evidence="1">Cytoplasm</location>
    </subcellularLocation>
</comment>
<evidence type="ECO:0000250" key="1"/>
<evidence type="ECO:0000255" key="2">
    <source>
        <dbReference type="PROSITE-ProRule" id="PRU00681"/>
    </source>
</evidence>
<feature type="chain" id="PRO_0000107876" description="Phosphocarrier protein HPr">
    <location>
        <begin position="1"/>
        <end position="88"/>
    </location>
</feature>
<feature type="domain" description="HPr" evidence="2">
    <location>
        <begin position="1"/>
        <end position="88"/>
    </location>
</feature>
<feature type="active site" description="Pros-phosphohistidine intermediate" evidence="2">
    <location>
        <position position="15"/>
    </location>
</feature>
<feature type="modified residue" description="Phosphoserine; by HPrK/P" evidence="2">
    <location>
        <position position="46"/>
    </location>
</feature>